<name>RNH_CROS8</name>
<organism>
    <name type="scientific">Cronobacter sakazakii (strain ATCC BAA-894)</name>
    <name type="common">Enterobacter sakazakii</name>
    <dbReference type="NCBI Taxonomy" id="290339"/>
    <lineage>
        <taxon>Bacteria</taxon>
        <taxon>Pseudomonadati</taxon>
        <taxon>Pseudomonadota</taxon>
        <taxon>Gammaproteobacteria</taxon>
        <taxon>Enterobacterales</taxon>
        <taxon>Enterobacteriaceae</taxon>
        <taxon>Cronobacter</taxon>
    </lineage>
</organism>
<gene>
    <name evidence="1" type="primary">rnhA</name>
    <name type="ordered locus">ESA_03125</name>
</gene>
<accession>A7MI34</accession>
<keyword id="KW-0963">Cytoplasm</keyword>
<keyword id="KW-0255">Endonuclease</keyword>
<keyword id="KW-0378">Hydrolase</keyword>
<keyword id="KW-0460">Magnesium</keyword>
<keyword id="KW-0479">Metal-binding</keyword>
<keyword id="KW-0540">Nuclease</keyword>
<keyword id="KW-1185">Reference proteome</keyword>
<reference key="1">
    <citation type="journal article" date="2010" name="PLoS ONE">
        <title>Genome sequence of Cronobacter sakazakii BAA-894 and comparative genomic hybridization analysis with other Cronobacter species.</title>
        <authorList>
            <person name="Kucerova E."/>
            <person name="Clifton S.W."/>
            <person name="Xia X.Q."/>
            <person name="Long F."/>
            <person name="Porwollik S."/>
            <person name="Fulton L."/>
            <person name="Fronick C."/>
            <person name="Minx P."/>
            <person name="Kyung K."/>
            <person name="Warren W."/>
            <person name="Fulton R."/>
            <person name="Feng D."/>
            <person name="Wollam A."/>
            <person name="Shah N."/>
            <person name="Bhonagiri V."/>
            <person name="Nash W.E."/>
            <person name="Hallsworth-Pepin K."/>
            <person name="Wilson R.K."/>
            <person name="McClelland M."/>
            <person name="Forsythe S.J."/>
        </authorList>
    </citation>
    <scope>NUCLEOTIDE SEQUENCE [LARGE SCALE GENOMIC DNA]</scope>
    <source>
        <strain>ATCC BAA-894</strain>
    </source>
</reference>
<sequence>MRKQVEIFTDGSCLGNPGPGGYGAILRYKQHERTFSAGYRLTTNNRMELMAAIVSLEALREHCIVTLSTDSQYVRQGITQWIHNWKKRGWKTAEKKPVKNVDLWQRLDAALSQHEIKWEWVKGHAGHPENERCDELARAAAMAPTLEDTGYQPEATAS</sequence>
<evidence type="ECO:0000255" key="1">
    <source>
        <dbReference type="HAMAP-Rule" id="MF_00042"/>
    </source>
</evidence>
<evidence type="ECO:0000255" key="2">
    <source>
        <dbReference type="PROSITE-ProRule" id="PRU00408"/>
    </source>
</evidence>
<dbReference type="EC" id="3.1.26.4" evidence="1"/>
<dbReference type="EMBL" id="CP000783">
    <property type="protein sequence ID" value="ABU78352.1"/>
    <property type="molecule type" value="Genomic_DNA"/>
</dbReference>
<dbReference type="SMR" id="A7MI34"/>
<dbReference type="KEGG" id="esa:ESA_03125"/>
<dbReference type="HOGENOM" id="CLU_030894_6_2_6"/>
<dbReference type="Proteomes" id="UP000000260">
    <property type="component" value="Chromosome"/>
</dbReference>
<dbReference type="GO" id="GO:0005737">
    <property type="term" value="C:cytoplasm"/>
    <property type="evidence" value="ECO:0007669"/>
    <property type="project" value="UniProtKB-SubCell"/>
</dbReference>
<dbReference type="GO" id="GO:0000287">
    <property type="term" value="F:magnesium ion binding"/>
    <property type="evidence" value="ECO:0007669"/>
    <property type="project" value="UniProtKB-UniRule"/>
</dbReference>
<dbReference type="GO" id="GO:0003676">
    <property type="term" value="F:nucleic acid binding"/>
    <property type="evidence" value="ECO:0007669"/>
    <property type="project" value="InterPro"/>
</dbReference>
<dbReference type="GO" id="GO:0004523">
    <property type="term" value="F:RNA-DNA hybrid ribonuclease activity"/>
    <property type="evidence" value="ECO:0007669"/>
    <property type="project" value="UniProtKB-UniRule"/>
</dbReference>
<dbReference type="GO" id="GO:0043137">
    <property type="term" value="P:DNA replication, removal of RNA primer"/>
    <property type="evidence" value="ECO:0007669"/>
    <property type="project" value="TreeGrafter"/>
</dbReference>
<dbReference type="CDD" id="cd09278">
    <property type="entry name" value="RNase_HI_prokaryote_like"/>
    <property type="match status" value="1"/>
</dbReference>
<dbReference type="FunFam" id="3.30.420.10:FF:000008">
    <property type="entry name" value="Ribonuclease H"/>
    <property type="match status" value="1"/>
</dbReference>
<dbReference type="Gene3D" id="3.30.420.10">
    <property type="entry name" value="Ribonuclease H-like superfamily/Ribonuclease H"/>
    <property type="match status" value="1"/>
</dbReference>
<dbReference type="HAMAP" id="MF_00042">
    <property type="entry name" value="RNase_H"/>
    <property type="match status" value="1"/>
</dbReference>
<dbReference type="InterPro" id="IPR050092">
    <property type="entry name" value="RNase_H"/>
</dbReference>
<dbReference type="InterPro" id="IPR012337">
    <property type="entry name" value="RNaseH-like_sf"/>
</dbReference>
<dbReference type="InterPro" id="IPR002156">
    <property type="entry name" value="RNaseH_domain"/>
</dbReference>
<dbReference type="InterPro" id="IPR036397">
    <property type="entry name" value="RNaseH_sf"/>
</dbReference>
<dbReference type="InterPro" id="IPR022892">
    <property type="entry name" value="RNaseHI"/>
</dbReference>
<dbReference type="NCBIfam" id="NF001236">
    <property type="entry name" value="PRK00203.1"/>
    <property type="match status" value="1"/>
</dbReference>
<dbReference type="PANTHER" id="PTHR10642">
    <property type="entry name" value="RIBONUCLEASE H1"/>
    <property type="match status" value="1"/>
</dbReference>
<dbReference type="PANTHER" id="PTHR10642:SF26">
    <property type="entry name" value="RIBONUCLEASE H1"/>
    <property type="match status" value="1"/>
</dbReference>
<dbReference type="Pfam" id="PF00075">
    <property type="entry name" value="RNase_H"/>
    <property type="match status" value="1"/>
</dbReference>
<dbReference type="SUPFAM" id="SSF53098">
    <property type="entry name" value="Ribonuclease H-like"/>
    <property type="match status" value="1"/>
</dbReference>
<dbReference type="PROSITE" id="PS50879">
    <property type="entry name" value="RNASE_H_1"/>
    <property type="match status" value="1"/>
</dbReference>
<protein>
    <recommendedName>
        <fullName evidence="1">Ribonuclease H</fullName>
        <shortName evidence="1">RNase H</shortName>
        <ecNumber evidence="1">3.1.26.4</ecNumber>
    </recommendedName>
</protein>
<comment type="function">
    <text evidence="1">Endonuclease that specifically degrades the RNA of RNA-DNA hybrids.</text>
</comment>
<comment type="catalytic activity">
    <reaction evidence="1">
        <text>Endonucleolytic cleavage to 5'-phosphomonoester.</text>
        <dbReference type="EC" id="3.1.26.4"/>
    </reaction>
</comment>
<comment type="cofactor">
    <cofactor evidence="1">
        <name>Mg(2+)</name>
        <dbReference type="ChEBI" id="CHEBI:18420"/>
    </cofactor>
    <text evidence="1">Binds 1 Mg(2+) ion per subunit. May bind a second metal ion at a regulatory site, or after substrate binding.</text>
</comment>
<comment type="subunit">
    <text evidence="1">Monomer.</text>
</comment>
<comment type="subcellular location">
    <subcellularLocation>
        <location evidence="1">Cytoplasm</location>
    </subcellularLocation>
</comment>
<comment type="similarity">
    <text evidence="1">Belongs to the RNase H family.</text>
</comment>
<feature type="chain" id="PRO_1000074645" description="Ribonuclease H">
    <location>
        <begin position="1"/>
        <end position="158"/>
    </location>
</feature>
<feature type="domain" description="RNase H type-1" evidence="2">
    <location>
        <begin position="1"/>
        <end position="142"/>
    </location>
</feature>
<feature type="binding site" evidence="1">
    <location>
        <position position="10"/>
    </location>
    <ligand>
        <name>Mg(2+)</name>
        <dbReference type="ChEBI" id="CHEBI:18420"/>
        <label>1</label>
    </ligand>
</feature>
<feature type="binding site" evidence="1">
    <location>
        <position position="10"/>
    </location>
    <ligand>
        <name>Mg(2+)</name>
        <dbReference type="ChEBI" id="CHEBI:18420"/>
        <label>2</label>
    </ligand>
</feature>
<feature type="binding site" evidence="1">
    <location>
        <position position="48"/>
    </location>
    <ligand>
        <name>Mg(2+)</name>
        <dbReference type="ChEBI" id="CHEBI:18420"/>
        <label>1</label>
    </ligand>
</feature>
<feature type="binding site" evidence="1">
    <location>
        <position position="70"/>
    </location>
    <ligand>
        <name>Mg(2+)</name>
        <dbReference type="ChEBI" id="CHEBI:18420"/>
        <label>1</label>
    </ligand>
</feature>
<feature type="binding site" evidence="1">
    <location>
        <position position="134"/>
    </location>
    <ligand>
        <name>Mg(2+)</name>
        <dbReference type="ChEBI" id="CHEBI:18420"/>
        <label>2</label>
    </ligand>
</feature>
<proteinExistence type="inferred from homology"/>